<geneLocation type="plastid"/>
<comment type="function">
    <text evidence="1">This b-type cytochrome is tightly associated with the reaction center of photosystem II (PSII). PSII is a light-driven water:plastoquinone oxidoreductase that uses light energy to abstract electrons from H(2)O, generating O(2) and a proton gradient subsequently used for ATP formation. It consists of a core antenna complex that captures photons, and an electron transfer chain that converts photonic excitation into a charge separation.</text>
</comment>
<comment type="cofactor">
    <cofactor evidence="1">
        <name>heme b</name>
        <dbReference type="ChEBI" id="CHEBI:60344"/>
    </cofactor>
    <text evidence="1">With its partner (PsbE) binds heme. PSII binds additional chlorophylls, carotenoids and specific lipids.</text>
</comment>
<comment type="subunit">
    <text evidence="1">Heterodimer of an alpha subunit and a beta subunit. PSII is composed of 1 copy each of membrane proteins PsbA, PsbB, PsbC, PsbD, PsbE, PsbF, PsbH, PsbI, PsbJ, PsbK, PsbL, PsbM, PsbT, PsbX, PsbY, PsbZ, Psb30/Ycf12, at least 3 peripheral proteins of the oxygen-evolving complex and a large number of cofactors. It forms dimeric complexes.</text>
</comment>
<comment type="subcellular location">
    <subcellularLocation>
        <location evidence="2">Plastid membrane</location>
        <topology evidence="1">Single-pass membrane protein</topology>
    </subcellularLocation>
</comment>
<comment type="similarity">
    <text evidence="1">Belongs to the PsbE/PsbF family.</text>
</comment>
<comment type="caution">
    <text evidence="2">This organism being non-photosynthetic, the role of this protein is uncertain.</text>
</comment>
<proteinExistence type="inferred from homology"/>
<sequence length="39" mass="4426">MTMDRTSPIFTVRWLAVHGLAVPTVFFLGSISAMQFIQR</sequence>
<keyword id="KW-0249">Electron transport</keyword>
<keyword id="KW-0349">Heme</keyword>
<keyword id="KW-0408">Iron</keyword>
<keyword id="KW-0472">Membrane</keyword>
<keyword id="KW-0479">Metal-binding</keyword>
<keyword id="KW-0602">Photosynthesis</keyword>
<keyword id="KW-0604">Photosystem II</keyword>
<keyword id="KW-0934">Plastid</keyword>
<keyword id="KW-0812">Transmembrane</keyword>
<keyword id="KW-1133">Transmembrane helix</keyword>
<keyword id="KW-0813">Transport</keyword>
<protein>
    <recommendedName>
        <fullName evidence="1">Cytochrome b559 subunit beta</fullName>
    </recommendedName>
    <alternativeName>
        <fullName evidence="1">PSII reaction center subunit VI</fullName>
    </alternativeName>
</protein>
<dbReference type="EMBL" id="AY100951">
    <property type="protein sequence ID" value="AAM55922.1"/>
    <property type="molecule type" value="Genomic_DNA"/>
</dbReference>
<dbReference type="SMR" id="Q8MAW5"/>
<dbReference type="GO" id="GO:0009539">
    <property type="term" value="C:photosystem II reaction center"/>
    <property type="evidence" value="ECO:0007669"/>
    <property type="project" value="InterPro"/>
</dbReference>
<dbReference type="GO" id="GO:0042170">
    <property type="term" value="C:plastid membrane"/>
    <property type="evidence" value="ECO:0007669"/>
    <property type="project" value="UniProtKB-SubCell"/>
</dbReference>
<dbReference type="GO" id="GO:0042651">
    <property type="term" value="C:thylakoid membrane"/>
    <property type="evidence" value="ECO:0007669"/>
    <property type="project" value="UniProtKB-UniRule"/>
</dbReference>
<dbReference type="GO" id="GO:0009055">
    <property type="term" value="F:electron transfer activity"/>
    <property type="evidence" value="ECO:0007669"/>
    <property type="project" value="UniProtKB-UniRule"/>
</dbReference>
<dbReference type="GO" id="GO:0020037">
    <property type="term" value="F:heme binding"/>
    <property type="evidence" value="ECO:0007669"/>
    <property type="project" value="InterPro"/>
</dbReference>
<dbReference type="GO" id="GO:0005506">
    <property type="term" value="F:iron ion binding"/>
    <property type="evidence" value="ECO:0007669"/>
    <property type="project" value="UniProtKB-UniRule"/>
</dbReference>
<dbReference type="HAMAP" id="MF_00643">
    <property type="entry name" value="PSII_PsbF"/>
    <property type="match status" value="1"/>
</dbReference>
<dbReference type="InterPro" id="IPR006241">
    <property type="entry name" value="PSII_cyt_b559_bsu"/>
</dbReference>
<dbReference type="InterPro" id="IPR006216">
    <property type="entry name" value="PSII_cyt_b559_CS"/>
</dbReference>
<dbReference type="InterPro" id="IPR013081">
    <property type="entry name" value="PSII_cyt_b559_N"/>
</dbReference>
<dbReference type="NCBIfam" id="TIGR01333">
    <property type="entry name" value="cyt_b559_beta"/>
    <property type="match status" value="1"/>
</dbReference>
<dbReference type="Pfam" id="PF00283">
    <property type="entry name" value="Cytochrom_B559"/>
    <property type="match status" value="1"/>
</dbReference>
<dbReference type="PIRSF" id="PIRSF000037">
    <property type="entry name" value="PsbF"/>
    <property type="match status" value="1"/>
</dbReference>
<dbReference type="SUPFAM" id="SSF161045">
    <property type="entry name" value="Cytochrome b559 subunits"/>
    <property type="match status" value="1"/>
</dbReference>
<dbReference type="PROSITE" id="PS00537">
    <property type="entry name" value="CYTOCHROME_B559"/>
    <property type="match status" value="1"/>
</dbReference>
<name>PSBF_CUSEU</name>
<evidence type="ECO:0000255" key="1">
    <source>
        <dbReference type="HAMAP-Rule" id="MF_00643"/>
    </source>
</evidence>
<evidence type="ECO:0000305" key="2"/>
<reference key="1">
    <citation type="journal article" date="2002" name="Am. J. Bot.">
        <title>Monophyly of the Convolvulaceae and circumscription of their major lineages based on DNA sequences of multiple chloroplast loci.</title>
        <authorList>
            <person name="Stefanovic S."/>
            <person name="Krueger L."/>
            <person name="Olmstead R.G."/>
        </authorList>
        <dbReference type="AGRICOLA" id="IND23320510"/>
    </citation>
    <scope>NUCLEOTIDE SEQUENCE [GENOMIC DNA]</scope>
</reference>
<feature type="chain" id="PRO_0000200380" description="Cytochrome b559 subunit beta">
    <location>
        <begin position="1"/>
        <end position="39"/>
    </location>
</feature>
<feature type="transmembrane region" description="Helical" evidence="1">
    <location>
        <begin position="14"/>
        <end position="30"/>
    </location>
</feature>
<feature type="binding site" description="axial binding residue" evidence="1">
    <location>
        <position position="18"/>
    </location>
    <ligand>
        <name>heme</name>
        <dbReference type="ChEBI" id="CHEBI:30413"/>
        <note>ligand shared with alpha subunit</note>
    </ligand>
    <ligandPart>
        <name>Fe</name>
        <dbReference type="ChEBI" id="CHEBI:18248"/>
    </ligandPart>
</feature>
<gene>
    <name evidence="1" type="primary">psbF</name>
</gene>
<accession>Q8MAW5</accession>
<organism>
    <name type="scientific">Cuscuta europaea</name>
    <name type="common">European dodder</name>
    <dbReference type="NCBI Taxonomy" id="41803"/>
    <lineage>
        <taxon>Eukaryota</taxon>
        <taxon>Viridiplantae</taxon>
        <taxon>Streptophyta</taxon>
        <taxon>Embryophyta</taxon>
        <taxon>Tracheophyta</taxon>
        <taxon>Spermatophyta</taxon>
        <taxon>Magnoliopsida</taxon>
        <taxon>eudicotyledons</taxon>
        <taxon>Gunneridae</taxon>
        <taxon>Pentapetalae</taxon>
        <taxon>asterids</taxon>
        <taxon>lamiids</taxon>
        <taxon>Solanales</taxon>
        <taxon>Convolvulaceae</taxon>
        <taxon>Cuscuteae</taxon>
        <taxon>Cuscuta</taxon>
        <taxon>Cuscuta subgen. Cuscuta</taxon>
    </lineage>
</organism>